<evidence type="ECO:0000255" key="1">
    <source>
        <dbReference type="HAMAP-Rule" id="MF_00411"/>
    </source>
</evidence>
<accession>Q8PUR2</accession>
<name>RPO1C_METMA</name>
<feature type="chain" id="PRO_0000074016" description="DNA-directed RNA polymerase subunit Rpo1C">
    <location>
        <begin position="1"/>
        <end position="408"/>
    </location>
</feature>
<gene>
    <name evidence="1" type="primary">rpo1C</name>
    <name evidence="1" type="synonym">rpoA2</name>
    <name type="ordered locus">MM_2270</name>
</gene>
<comment type="function">
    <text evidence="1">DNA-dependent RNA polymerase (RNAP) catalyzes the transcription of DNA into RNA using the four ribonucleoside triphosphates as substrates. Forms part of the jaw domain.</text>
</comment>
<comment type="catalytic activity">
    <reaction evidence="1">
        <text>RNA(n) + a ribonucleoside 5'-triphosphate = RNA(n+1) + diphosphate</text>
        <dbReference type="Rhea" id="RHEA:21248"/>
        <dbReference type="Rhea" id="RHEA-COMP:14527"/>
        <dbReference type="Rhea" id="RHEA-COMP:17342"/>
        <dbReference type="ChEBI" id="CHEBI:33019"/>
        <dbReference type="ChEBI" id="CHEBI:61557"/>
        <dbReference type="ChEBI" id="CHEBI:140395"/>
        <dbReference type="EC" id="2.7.7.6"/>
    </reaction>
</comment>
<comment type="subunit">
    <text evidence="1">Part of the RNA polymerase complex.</text>
</comment>
<comment type="subcellular location">
    <subcellularLocation>
        <location evidence="1">Cytoplasm</location>
    </subcellularLocation>
</comment>
<comment type="similarity">
    <text evidence="1">Belongs to the RNA polymerase beta' chain family.</text>
</comment>
<dbReference type="EC" id="2.7.7.6" evidence="1"/>
<dbReference type="EMBL" id="AE008384">
    <property type="protein sequence ID" value="AAM31966.1"/>
    <property type="molecule type" value="Genomic_DNA"/>
</dbReference>
<dbReference type="SMR" id="Q8PUR2"/>
<dbReference type="KEGG" id="mma:MM_2270"/>
<dbReference type="PATRIC" id="fig|192952.21.peg.2600"/>
<dbReference type="eggNOG" id="arCOG04256">
    <property type="taxonomic scope" value="Archaea"/>
</dbReference>
<dbReference type="HOGENOM" id="CLU_037097_1_0_2"/>
<dbReference type="Proteomes" id="UP000000595">
    <property type="component" value="Chromosome"/>
</dbReference>
<dbReference type="GO" id="GO:0005737">
    <property type="term" value="C:cytoplasm"/>
    <property type="evidence" value="ECO:0007669"/>
    <property type="project" value="UniProtKB-SubCell"/>
</dbReference>
<dbReference type="GO" id="GO:0000428">
    <property type="term" value="C:DNA-directed RNA polymerase complex"/>
    <property type="evidence" value="ECO:0007669"/>
    <property type="project" value="UniProtKB-KW"/>
</dbReference>
<dbReference type="GO" id="GO:0003677">
    <property type="term" value="F:DNA binding"/>
    <property type="evidence" value="ECO:0007669"/>
    <property type="project" value="UniProtKB-UniRule"/>
</dbReference>
<dbReference type="GO" id="GO:0003899">
    <property type="term" value="F:DNA-directed RNA polymerase activity"/>
    <property type="evidence" value="ECO:0007669"/>
    <property type="project" value="UniProtKB-UniRule"/>
</dbReference>
<dbReference type="GO" id="GO:0006351">
    <property type="term" value="P:DNA-templated transcription"/>
    <property type="evidence" value="ECO:0007669"/>
    <property type="project" value="UniProtKB-UniRule"/>
</dbReference>
<dbReference type="CDD" id="cd06528">
    <property type="entry name" value="RNAP_A"/>
    <property type="match status" value="1"/>
</dbReference>
<dbReference type="Gene3D" id="1.10.150.390">
    <property type="match status" value="1"/>
</dbReference>
<dbReference type="HAMAP" id="MF_00411">
    <property type="entry name" value="RNApol_arch_Rpo1C"/>
    <property type="match status" value="1"/>
</dbReference>
<dbReference type="InterPro" id="IPR045867">
    <property type="entry name" value="DNA-dir_RpoC_beta_prime"/>
</dbReference>
<dbReference type="InterPro" id="IPR007081">
    <property type="entry name" value="RNA_pol_Rpb1_5"/>
</dbReference>
<dbReference type="InterPro" id="IPR012757">
    <property type="entry name" value="RPO1C"/>
</dbReference>
<dbReference type="NCBIfam" id="TIGR02389">
    <property type="entry name" value="RNA_pol_rpoA2"/>
    <property type="match status" value="1"/>
</dbReference>
<dbReference type="PANTHER" id="PTHR19376">
    <property type="entry name" value="DNA-DIRECTED RNA POLYMERASE"/>
    <property type="match status" value="1"/>
</dbReference>
<dbReference type="PANTHER" id="PTHR19376:SF32">
    <property type="entry name" value="DNA-DIRECTED RNA POLYMERASE III SUBUNIT RPC1"/>
    <property type="match status" value="1"/>
</dbReference>
<dbReference type="Pfam" id="PF04998">
    <property type="entry name" value="RNA_pol_Rpb1_5"/>
    <property type="match status" value="1"/>
</dbReference>
<dbReference type="SUPFAM" id="SSF64484">
    <property type="entry name" value="beta and beta-prime subunits of DNA dependent RNA-polymerase"/>
    <property type="match status" value="1"/>
</dbReference>
<keyword id="KW-0963">Cytoplasm</keyword>
<keyword id="KW-0238">DNA-binding</keyword>
<keyword id="KW-0240">DNA-directed RNA polymerase</keyword>
<keyword id="KW-0548">Nucleotidyltransferase</keyword>
<keyword id="KW-0804">Transcription</keyword>
<keyword id="KW-0808">Transferase</keyword>
<sequence>MMSISEATVDSMIKDLPLPSNILKTLRDDVIKAGVSKKEMEEIIERVMEEYTVSCIEPCDAAGVVAAQSIGEPGTQMTMRTFHYAGVAEINVTLGLPRLIEIVDARKIPSTPMMTIALSKEHPEDYAYDREKTRALAWEIEATKIDHIADVTTDLSQMKLIIDLHEKAMEGRNITIDRVKEKFNEELNVLVSISPDIDNQIVITPGEPSYRELLQLAKSIHNVTLKGIEGIKRVVVRKEGEEYTLYTEGSALREVLQFEGVDRTRTSTNNINEIYEVLGIEAARNAIIKEATDTLREQGLTVDIRHIMLVADLMTSDGEVKQIGRHGISGEKASVFARAAFEVTVNHLLDAGMRGYVDQLQGVTENIIVGQPIRMGTGDVHLISRKAEKVVEVPPEIETAEEIEVEEG</sequence>
<organism>
    <name type="scientific">Methanosarcina mazei (strain ATCC BAA-159 / DSM 3647 / Goe1 / Go1 / JCM 11833 / OCM 88)</name>
    <name type="common">Methanosarcina frisia</name>
    <dbReference type="NCBI Taxonomy" id="192952"/>
    <lineage>
        <taxon>Archaea</taxon>
        <taxon>Methanobacteriati</taxon>
        <taxon>Methanobacteriota</taxon>
        <taxon>Stenosarchaea group</taxon>
        <taxon>Methanomicrobia</taxon>
        <taxon>Methanosarcinales</taxon>
        <taxon>Methanosarcinaceae</taxon>
        <taxon>Methanosarcina</taxon>
    </lineage>
</organism>
<protein>
    <recommendedName>
        <fullName evidence="1">DNA-directed RNA polymerase subunit Rpo1C</fullName>
        <ecNumber evidence="1">2.7.7.6</ecNumber>
    </recommendedName>
    <alternativeName>
        <fullName evidence="1">DNA-directed RNA polymerase subunit A''</fullName>
    </alternativeName>
</protein>
<proteinExistence type="inferred from homology"/>
<reference key="1">
    <citation type="journal article" date="2002" name="J. Mol. Microbiol. Biotechnol.">
        <title>The genome of Methanosarcina mazei: evidence for lateral gene transfer between Bacteria and Archaea.</title>
        <authorList>
            <person name="Deppenmeier U."/>
            <person name="Johann A."/>
            <person name="Hartsch T."/>
            <person name="Merkl R."/>
            <person name="Schmitz R.A."/>
            <person name="Martinez-Arias R."/>
            <person name="Henne A."/>
            <person name="Wiezer A."/>
            <person name="Baeumer S."/>
            <person name="Jacobi C."/>
            <person name="Brueggemann H."/>
            <person name="Lienard T."/>
            <person name="Christmann A."/>
            <person name="Boemecke M."/>
            <person name="Steckel S."/>
            <person name="Bhattacharyya A."/>
            <person name="Lykidis A."/>
            <person name="Overbeek R."/>
            <person name="Klenk H.-P."/>
            <person name="Gunsalus R.P."/>
            <person name="Fritz H.-J."/>
            <person name="Gottschalk G."/>
        </authorList>
    </citation>
    <scope>NUCLEOTIDE SEQUENCE [LARGE SCALE GENOMIC DNA]</scope>
    <source>
        <strain>ATCC BAA-159 / DSM 3647 / Goe1 / Go1 / JCM 11833 / OCM 88</strain>
    </source>
</reference>